<protein>
    <recommendedName>
        <fullName evidence="1">Large ribosomal subunit protein uL5</fullName>
    </recommendedName>
    <alternativeName>
        <fullName evidence="2">50S ribosomal protein L5</fullName>
    </alternativeName>
</protein>
<proteinExistence type="inferred from homology"/>
<dbReference type="EMBL" id="CP000896">
    <property type="protein sequence ID" value="ABX80725.1"/>
    <property type="molecule type" value="Genomic_DNA"/>
</dbReference>
<dbReference type="RefSeq" id="WP_012242056.1">
    <property type="nucleotide sequence ID" value="NC_010163.1"/>
</dbReference>
<dbReference type="SMR" id="A9NEE5"/>
<dbReference type="STRING" id="441768.ACL_0099"/>
<dbReference type="GeneID" id="41338301"/>
<dbReference type="KEGG" id="acl:ACL_0099"/>
<dbReference type="eggNOG" id="COG0094">
    <property type="taxonomic scope" value="Bacteria"/>
</dbReference>
<dbReference type="HOGENOM" id="CLU_061015_2_1_14"/>
<dbReference type="OrthoDB" id="9806626at2"/>
<dbReference type="Proteomes" id="UP000008558">
    <property type="component" value="Chromosome"/>
</dbReference>
<dbReference type="GO" id="GO:1990904">
    <property type="term" value="C:ribonucleoprotein complex"/>
    <property type="evidence" value="ECO:0007669"/>
    <property type="project" value="UniProtKB-KW"/>
</dbReference>
<dbReference type="GO" id="GO:0005840">
    <property type="term" value="C:ribosome"/>
    <property type="evidence" value="ECO:0007669"/>
    <property type="project" value="UniProtKB-KW"/>
</dbReference>
<dbReference type="GO" id="GO:0019843">
    <property type="term" value="F:rRNA binding"/>
    <property type="evidence" value="ECO:0007669"/>
    <property type="project" value="UniProtKB-UniRule"/>
</dbReference>
<dbReference type="GO" id="GO:0003735">
    <property type="term" value="F:structural constituent of ribosome"/>
    <property type="evidence" value="ECO:0007669"/>
    <property type="project" value="InterPro"/>
</dbReference>
<dbReference type="GO" id="GO:0000049">
    <property type="term" value="F:tRNA binding"/>
    <property type="evidence" value="ECO:0007669"/>
    <property type="project" value="UniProtKB-UniRule"/>
</dbReference>
<dbReference type="GO" id="GO:0006412">
    <property type="term" value="P:translation"/>
    <property type="evidence" value="ECO:0007669"/>
    <property type="project" value="UniProtKB-UniRule"/>
</dbReference>
<dbReference type="FunFam" id="3.30.1440.10:FF:000001">
    <property type="entry name" value="50S ribosomal protein L5"/>
    <property type="match status" value="1"/>
</dbReference>
<dbReference type="Gene3D" id="3.30.1440.10">
    <property type="match status" value="1"/>
</dbReference>
<dbReference type="HAMAP" id="MF_01333_B">
    <property type="entry name" value="Ribosomal_uL5_B"/>
    <property type="match status" value="1"/>
</dbReference>
<dbReference type="InterPro" id="IPR002132">
    <property type="entry name" value="Ribosomal_uL5"/>
</dbReference>
<dbReference type="InterPro" id="IPR020930">
    <property type="entry name" value="Ribosomal_uL5_bac-type"/>
</dbReference>
<dbReference type="InterPro" id="IPR031309">
    <property type="entry name" value="Ribosomal_uL5_C"/>
</dbReference>
<dbReference type="InterPro" id="IPR020929">
    <property type="entry name" value="Ribosomal_uL5_CS"/>
</dbReference>
<dbReference type="InterPro" id="IPR022803">
    <property type="entry name" value="Ribosomal_uL5_dom_sf"/>
</dbReference>
<dbReference type="InterPro" id="IPR031310">
    <property type="entry name" value="Ribosomal_uL5_N"/>
</dbReference>
<dbReference type="NCBIfam" id="NF000585">
    <property type="entry name" value="PRK00010.1"/>
    <property type="match status" value="1"/>
</dbReference>
<dbReference type="PANTHER" id="PTHR11994">
    <property type="entry name" value="60S RIBOSOMAL PROTEIN L11-RELATED"/>
    <property type="match status" value="1"/>
</dbReference>
<dbReference type="Pfam" id="PF00281">
    <property type="entry name" value="Ribosomal_L5"/>
    <property type="match status" value="1"/>
</dbReference>
<dbReference type="Pfam" id="PF00673">
    <property type="entry name" value="Ribosomal_L5_C"/>
    <property type="match status" value="1"/>
</dbReference>
<dbReference type="PIRSF" id="PIRSF002161">
    <property type="entry name" value="Ribosomal_L5"/>
    <property type="match status" value="1"/>
</dbReference>
<dbReference type="SUPFAM" id="SSF55282">
    <property type="entry name" value="RL5-like"/>
    <property type="match status" value="1"/>
</dbReference>
<dbReference type="PROSITE" id="PS00358">
    <property type="entry name" value="RIBOSOMAL_L5"/>
    <property type="match status" value="1"/>
</dbReference>
<feature type="chain" id="PRO_1000086578" description="Large ribosomal subunit protein uL5">
    <location>
        <begin position="1"/>
        <end position="180"/>
    </location>
</feature>
<gene>
    <name evidence="1" type="primary">rplE</name>
    <name type="ordered locus">ACL_0099</name>
</gene>
<reference key="1">
    <citation type="journal article" date="2011" name="J. Bacteriol.">
        <title>Complete genome and proteome of Acholeplasma laidlawii.</title>
        <authorList>
            <person name="Lazarev V.N."/>
            <person name="Levitskii S.A."/>
            <person name="Basovskii Y.I."/>
            <person name="Chukin M.M."/>
            <person name="Akopian T.A."/>
            <person name="Vereshchagin V.V."/>
            <person name="Kostrjukova E.S."/>
            <person name="Kovaleva G.Y."/>
            <person name="Kazanov M.D."/>
            <person name="Malko D.B."/>
            <person name="Vitreschak A.G."/>
            <person name="Sernova N.V."/>
            <person name="Gelfand M.S."/>
            <person name="Demina I.A."/>
            <person name="Serebryakova M.V."/>
            <person name="Galyamina M.A."/>
            <person name="Vtyurin N.N."/>
            <person name="Rogov S.I."/>
            <person name="Alexeev D.G."/>
            <person name="Ladygina V.G."/>
            <person name="Govorun V.M."/>
        </authorList>
    </citation>
    <scope>NUCLEOTIDE SEQUENCE [LARGE SCALE GENOMIC DNA]</scope>
    <source>
        <strain>PG-8A</strain>
    </source>
</reference>
<keyword id="KW-1185">Reference proteome</keyword>
<keyword id="KW-0687">Ribonucleoprotein</keyword>
<keyword id="KW-0689">Ribosomal protein</keyword>
<keyword id="KW-0694">RNA-binding</keyword>
<keyword id="KW-0699">rRNA-binding</keyword>
<keyword id="KW-0820">tRNA-binding</keyword>
<evidence type="ECO:0000255" key="1">
    <source>
        <dbReference type="HAMAP-Rule" id="MF_01333"/>
    </source>
</evidence>
<evidence type="ECO:0000305" key="2"/>
<organism>
    <name type="scientific">Acholeplasma laidlawii (strain PG-8A)</name>
    <dbReference type="NCBI Taxonomy" id="441768"/>
    <lineage>
        <taxon>Bacteria</taxon>
        <taxon>Bacillati</taxon>
        <taxon>Mycoplasmatota</taxon>
        <taxon>Mollicutes</taxon>
        <taxon>Acholeplasmatales</taxon>
        <taxon>Acholeplasmataceae</taxon>
        <taxon>Acholeplasma</taxon>
    </lineage>
</organism>
<accession>A9NEE5</accession>
<name>RL5_ACHLI</name>
<comment type="function">
    <text evidence="1">This is one of the proteins that bind and probably mediate the attachment of the 5S RNA into the large ribosomal subunit, where it forms part of the central protuberance. In the 70S ribosome it contacts protein S13 of the 30S subunit (bridge B1b), connecting the 2 subunits; this bridge is implicated in subunit movement. Contacts the P site tRNA; the 5S rRNA and some of its associated proteins might help stabilize positioning of ribosome-bound tRNAs.</text>
</comment>
<comment type="subunit">
    <text evidence="1">Part of the 50S ribosomal subunit; part of the 5S rRNA/L5/L18/L25 subcomplex. Contacts the 5S rRNA and the P site tRNA. Forms a bridge to the 30S subunit in the 70S ribosome.</text>
</comment>
<comment type="similarity">
    <text evidence="1">Belongs to the universal ribosomal protein uL5 family.</text>
</comment>
<sequence>MSAAFKELYNTKIVPKLVSDFNYDSVMQVPKLEKIVVNMGVGEAVSNSKLLDQAVEELTLLTGQKPVITKAKKSISNFKLREGQSIGAKVTLRGDRMYYFLEKLVSVALPRVRDFRGVSANAFDGRGNYTLGVKEQIIFPEINIDKVNKVRGMDIIIVTTAQTDAEAKSLLTEFGFPFKK</sequence>